<feature type="chain" id="PRO_1000025636" description="Acetoacetate decarboxylase">
    <location>
        <begin position="1"/>
        <end position="246"/>
    </location>
</feature>
<feature type="active site" description="Schiff-base intermediate with acetoacetate" evidence="1">
    <location>
        <position position="116"/>
    </location>
</feature>
<reference key="1">
    <citation type="journal article" date="2004" name="Proc. Natl. Acad. Sci. U.S.A.">
        <title>Structural flexibility in the Burkholderia mallei genome.</title>
        <authorList>
            <person name="Nierman W.C."/>
            <person name="DeShazer D."/>
            <person name="Kim H.S."/>
            <person name="Tettelin H."/>
            <person name="Nelson K.E."/>
            <person name="Feldblyum T.V."/>
            <person name="Ulrich R.L."/>
            <person name="Ronning C.M."/>
            <person name="Brinkac L.M."/>
            <person name="Daugherty S.C."/>
            <person name="Davidsen T.D."/>
            <person name="DeBoy R.T."/>
            <person name="Dimitrov G."/>
            <person name="Dodson R.J."/>
            <person name="Durkin A.S."/>
            <person name="Gwinn M.L."/>
            <person name="Haft D.H."/>
            <person name="Khouri H.M."/>
            <person name="Kolonay J.F."/>
            <person name="Madupu R."/>
            <person name="Mohammoud Y."/>
            <person name="Nelson W.C."/>
            <person name="Radune D."/>
            <person name="Romero C.M."/>
            <person name="Sarria S."/>
            <person name="Selengut J."/>
            <person name="Shamblin C."/>
            <person name="Sullivan S.A."/>
            <person name="White O."/>
            <person name="Yu Y."/>
            <person name="Zafar N."/>
            <person name="Zhou L."/>
            <person name="Fraser C.M."/>
        </authorList>
    </citation>
    <scope>NUCLEOTIDE SEQUENCE [LARGE SCALE GENOMIC DNA]</scope>
    <source>
        <strain>ATCC 23344</strain>
    </source>
</reference>
<protein>
    <recommendedName>
        <fullName evidence="1">Acetoacetate decarboxylase</fullName>
        <shortName evidence="1">AAD</shortName>
        <shortName evidence="1">ADC</shortName>
        <ecNumber evidence="1">4.1.1.4</ecNumber>
    </recommendedName>
</protein>
<dbReference type="EC" id="4.1.1.4" evidence="1"/>
<dbReference type="EMBL" id="CP000011">
    <property type="protein sequence ID" value="AAU45550.1"/>
    <property type="molecule type" value="Genomic_DNA"/>
</dbReference>
<dbReference type="RefSeq" id="WP_004194452.1">
    <property type="nucleotide sequence ID" value="NC_006349.2"/>
</dbReference>
<dbReference type="RefSeq" id="YP_104875.1">
    <property type="nucleotide sequence ID" value="NC_006349.2"/>
</dbReference>
<dbReference type="SMR" id="Q62EK3"/>
<dbReference type="DNASU" id="3086006"/>
<dbReference type="KEGG" id="bma:BMAA0018"/>
<dbReference type="PATRIC" id="fig|243160.12.peg.3511"/>
<dbReference type="eggNOG" id="COG4689">
    <property type="taxonomic scope" value="Bacteria"/>
</dbReference>
<dbReference type="HOGENOM" id="CLU_077089_0_0_4"/>
<dbReference type="Proteomes" id="UP000006693">
    <property type="component" value="Chromosome 2"/>
</dbReference>
<dbReference type="GO" id="GO:0047602">
    <property type="term" value="F:acetoacetate decarboxylase activity"/>
    <property type="evidence" value="ECO:0007669"/>
    <property type="project" value="UniProtKB-UniRule"/>
</dbReference>
<dbReference type="Gene3D" id="2.40.400.10">
    <property type="entry name" value="Acetoacetate decarboxylase-like"/>
    <property type="match status" value="1"/>
</dbReference>
<dbReference type="HAMAP" id="MF_00597">
    <property type="entry name" value="ADC"/>
    <property type="match status" value="1"/>
</dbReference>
<dbReference type="InterPro" id="IPR010451">
    <property type="entry name" value="Acetoacetate_decarboxylase"/>
</dbReference>
<dbReference type="InterPro" id="IPR023653">
    <property type="entry name" value="Acetoacetate_decarboxylase_bac"/>
</dbReference>
<dbReference type="InterPro" id="IPR023375">
    <property type="entry name" value="ADC_dom_sf"/>
</dbReference>
<dbReference type="NCBIfam" id="NF002614">
    <property type="entry name" value="PRK02265.1"/>
    <property type="match status" value="1"/>
</dbReference>
<dbReference type="Pfam" id="PF06314">
    <property type="entry name" value="ADC"/>
    <property type="match status" value="1"/>
</dbReference>
<dbReference type="SUPFAM" id="SSF160104">
    <property type="entry name" value="Acetoacetate decarboxylase-like"/>
    <property type="match status" value="1"/>
</dbReference>
<proteinExistence type="inferred from homology"/>
<organism>
    <name type="scientific">Burkholderia mallei (strain ATCC 23344)</name>
    <dbReference type="NCBI Taxonomy" id="243160"/>
    <lineage>
        <taxon>Bacteria</taxon>
        <taxon>Pseudomonadati</taxon>
        <taxon>Pseudomonadota</taxon>
        <taxon>Betaproteobacteria</taxon>
        <taxon>Burkholderiales</taxon>
        <taxon>Burkholderiaceae</taxon>
        <taxon>Burkholderia</taxon>
        <taxon>pseudomallei group</taxon>
    </lineage>
</organism>
<sequence length="246" mass="27494">MKPSQVRSKAFAMPLTSPAFPMGPYRFVNREFLIITYRTDMDRLREIVPEPLEVKEPLVHYEFIRMPDSTGFGDYTESGQVIPVEYKGQPGGYTLAMYLNDHPPIAGGRELWGFPKKLAQPTLQTHIDTLLGTLDYGPVRVATGTMGYKHQELDLEEQAKRLAGANFLLKIIPHVDGSARVCELVRYYLQDIEMKGAWTGPASLQLAPHALAPVADLPVLEIVEARHLLADLTLGLGEVVYDYLAQ</sequence>
<name>ADC_BURMA</name>
<gene>
    <name evidence="1" type="primary">adc</name>
    <name type="ordered locus">BMAA0018</name>
</gene>
<accession>Q62EK3</accession>
<evidence type="ECO:0000255" key="1">
    <source>
        <dbReference type="HAMAP-Rule" id="MF_00597"/>
    </source>
</evidence>
<comment type="function">
    <text evidence="1">Catalyzes the conversion of acetoacetate to acetone and carbon dioxide.</text>
</comment>
<comment type="catalytic activity">
    <reaction evidence="1">
        <text>acetoacetate + H(+) = acetone + CO2</text>
        <dbReference type="Rhea" id="RHEA:19729"/>
        <dbReference type="ChEBI" id="CHEBI:13705"/>
        <dbReference type="ChEBI" id="CHEBI:15347"/>
        <dbReference type="ChEBI" id="CHEBI:15378"/>
        <dbReference type="ChEBI" id="CHEBI:16526"/>
        <dbReference type="EC" id="4.1.1.4"/>
    </reaction>
</comment>
<comment type="similarity">
    <text evidence="1">Belongs to the ADC family.</text>
</comment>
<keyword id="KW-0210">Decarboxylase</keyword>
<keyword id="KW-0456">Lyase</keyword>
<keyword id="KW-1185">Reference proteome</keyword>
<keyword id="KW-0704">Schiff base</keyword>